<dbReference type="EC" id="2.7.7.108"/>
<dbReference type="EMBL" id="L42023">
    <property type="protein sequence ID" value="AAC22637.1"/>
    <property type="molecule type" value="Genomic_DNA"/>
</dbReference>
<dbReference type="PIR" id="G64017">
    <property type="entry name" value="G64017"/>
</dbReference>
<dbReference type="RefSeq" id="NP_439140.1">
    <property type="nucleotide sequence ID" value="NC_000907.1"/>
</dbReference>
<dbReference type="SMR" id="P44088"/>
<dbReference type="STRING" id="71421.HI_0977"/>
<dbReference type="DNASU" id="949973"/>
<dbReference type="EnsemblBacteria" id="AAC22637">
    <property type="protein sequence ID" value="AAC22637"/>
    <property type="gene ID" value="HI_0977"/>
</dbReference>
<dbReference type="KEGG" id="hin:HI_0977"/>
<dbReference type="PATRIC" id="fig|71421.8.peg.1020"/>
<dbReference type="eggNOG" id="COG2184">
    <property type="taxonomic scope" value="Bacteria"/>
</dbReference>
<dbReference type="HOGENOM" id="CLU_080158_4_0_6"/>
<dbReference type="OrthoDB" id="9807853at2"/>
<dbReference type="PhylomeDB" id="P44088"/>
<dbReference type="BioCyc" id="HINF71421:G1GJ1-1019-MONOMER"/>
<dbReference type="Proteomes" id="UP000000579">
    <property type="component" value="Chromosome"/>
</dbReference>
<dbReference type="GO" id="GO:0070733">
    <property type="term" value="F:AMPylase activity"/>
    <property type="evidence" value="ECO:0007669"/>
    <property type="project" value="RHEA"/>
</dbReference>
<dbReference type="GO" id="GO:0005524">
    <property type="term" value="F:ATP binding"/>
    <property type="evidence" value="ECO:0007669"/>
    <property type="project" value="UniProtKB-KW"/>
</dbReference>
<dbReference type="GO" id="GO:0051302">
    <property type="term" value="P:regulation of cell division"/>
    <property type="evidence" value="ECO:0000318"/>
    <property type="project" value="GO_Central"/>
</dbReference>
<dbReference type="FunFam" id="1.10.3290.10:FF:000002">
    <property type="entry name" value="Protein adenylyltransferase NmFic"/>
    <property type="match status" value="1"/>
</dbReference>
<dbReference type="Gene3D" id="1.10.3290.10">
    <property type="entry name" value="Fido-like domain"/>
    <property type="match status" value="1"/>
</dbReference>
<dbReference type="InterPro" id="IPR003812">
    <property type="entry name" value="Fido"/>
</dbReference>
<dbReference type="InterPro" id="IPR036597">
    <property type="entry name" value="Fido-like_dom_sf"/>
</dbReference>
<dbReference type="NCBIfam" id="NF046029">
    <property type="entry name" value="ProtAdlyltaseNmFic"/>
    <property type="match status" value="1"/>
</dbReference>
<dbReference type="PANTHER" id="PTHR39560">
    <property type="entry name" value="PROTEIN ADENYLYLTRANSFERASE FIC-RELATED"/>
    <property type="match status" value="1"/>
</dbReference>
<dbReference type="PANTHER" id="PTHR39560:SF1">
    <property type="entry name" value="PROTEIN ADENYLYLTRANSFERASE FIC-RELATED"/>
    <property type="match status" value="1"/>
</dbReference>
<dbReference type="Pfam" id="PF02661">
    <property type="entry name" value="Fic"/>
    <property type="match status" value="1"/>
</dbReference>
<dbReference type="SUPFAM" id="SSF140931">
    <property type="entry name" value="Fic-like"/>
    <property type="match status" value="1"/>
</dbReference>
<dbReference type="PROSITE" id="PS51459">
    <property type="entry name" value="FIDO"/>
    <property type="match status" value="1"/>
</dbReference>
<comment type="function">
    <text evidence="1">Probable adenylyltransferase that mediates the addition of adenosine 5'-monophosphate (AMP) to specific residues of target proteins.</text>
</comment>
<comment type="catalytic activity">
    <reaction>
        <text>L-tyrosyl-[protein] + ATP = O-(5'-adenylyl)-L-tyrosyl-[protein] + diphosphate</text>
        <dbReference type="Rhea" id="RHEA:54288"/>
        <dbReference type="Rhea" id="RHEA-COMP:10136"/>
        <dbReference type="Rhea" id="RHEA-COMP:13846"/>
        <dbReference type="ChEBI" id="CHEBI:30616"/>
        <dbReference type="ChEBI" id="CHEBI:33019"/>
        <dbReference type="ChEBI" id="CHEBI:46858"/>
        <dbReference type="ChEBI" id="CHEBI:83624"/>
        <dbReference type="EC" id="2.7.7.108"/>
    </reaction>
</comment>
<comment type="catalytic activity">
    <reaction>
        <text>L-threonyl-[protein] + ATP = 3-O-(5'-adenylyl)-L-threonyl-[protein] + diphosphate</text>
        <dbReference type="Rhea" id="RHEA:54292"/>
        <dbReference type="Rhea" id="RHEA-COMP:11060"/>
        <dbReference type="Rhea" id="RHEA-COMP:13847"/>
        <dbReference type="ChEBI" id="CHEBI:30013"/>
        <dbReference type="ChEBI" id="CHEBI:30616"/>
        <dbReference type="ChEBI" id="CHEBI:33019"/>
        <dbReference type="ChEBI" id="CHEBI:138113"/>
        <dbReference type="EC" id="2.7.7.108"/>
    </reaction>
</comment>
<comment type="similarity">
    <text evidence="3">Belongs to the fic family.</text>
</comment>
<name>Y977_HAEIN</name>
<organism>
    <name type="scientific">Haemophilus influenzae (strain ATCC 51907 / DSM 11121 / KW20 / Rd)</name>
    <dbReference type="NCBI Taxonomy" id="71421"/>
    <lineage>
        <taxon>Bacteria</taxon>
        <taxon>Pseudomonadati</taxon>
        <taxon>Pseudomonadota</taxon>
        <taxon>Gammaproteobacteria</taxon>
        <taxon>Pasteurellales</taxon>
        <taxon>Pasteurellaceae</taxon>
        <taxon>Haemophilus</taxon>
    </lineage>
</organism>
<sequence>MPPKFWIIIIVKKIDQQSLENAYRLFESGDIHQIEIGSTKGLQQIHHYLFNGLYEFAGKIREQNISKGHFRFANALYLKEALGKIEQMPEDTFENIINKYVEMNIAHPFLEGNGRSTRIWLDLVLKKHLGKVVNWQNVDKTQYLQAMERSPINDLEIRFLLQANLTDDVNNREIIFKGIEQSYYYEGYEKE</sequence>
<proteinExistence type="inferred from homology"/>
<keyword id="KW-0067">ATP-binding</keyword>
<keyword id="KW-0547">Nucleotide-binding</keyword>
<keyword id="KW-0548">Nucleotidyltransferase</keyword>
<keyword id="KW-1185">Reference proteome</keyword>
<keyword id="KW-0808">Transferase</keyword>
<feature type="chain" id="PRO_0000077987" description="Probable protein adenylyltransferase HI_0977">
    <location>
        <begin position="1"/>
        <end position="191"/>
    </location>
</feature>
<feature type="domain" description="Fido" evidence="2">
    <location>
        <begin position="37"/>
        <end position="162"/>
    </location>
</feature>
<feature type="binding site" evidence="1">
    <location>
        <begin position="67"/>
        <end position="68"/>
    </location>
    <ligand>
        <name>ATP</name>
        <dbReference type="ChEBI" id="CHEBI:30616"/>
    </ligand>
</feature>
<feature type="binding site" evidence="1">
    <location>
        <begin position="112"/>
        <end position="114"/>
    </location>
    <ligand>
        <name>ATP</name>
        <dbReference type="ChEBI" id="CHEBI:30616"/>
    </ligand>
</feature>
<feature type="binding site" evidence="1">
    <location>
        <position position="118"/>
    </location>
    <ligand>
        <name>ATP</name>
        <dbReference type="ChEBI" id="CHEBI:30616"/>
    </ligand>
</feature>
<feature type="binding site" evidence="1">
    <location>
        <position position="145"/>
    </location>
    <ligand>
        <name>ATP</name>
        <dbReference type="ChEBI" id="CHEBI:30616"/>
    </ligand>
</feature>
<gene>
    <name type="ordered locus">HI_0977</name>
</gene>
<evidence type="ECO:0000250" key="1"/>
<evidence type="ECO:0000255" key="2">
    <source>
        <dbReference type="PROSITE-ProRule" id="PRU00791"/>
    </source>
</evidence>
<evidence type="ECO:0000305" key="3"/>
<protein>
    <recommendedName>
        <fullName>Probable protein adenylyltransferase HI_0977</fullName>
        <ecNumber>2.7.7.108</ecNumber>
    </recommendedName>
</protein>
<accession>P44088</accession>
<reference key="1">
    <citation type="journal article" date="1995" name="Science">
        <title>Whole-genome random sequencing and assembly of Haemophilus influenzae Rd.</title>
        <authorList>
            <person name="Fleischmann R.D."/>
            <person name="Adams M.D."/>
            <person name="White O."/>
            <person name="Clayton R.A."/>
            <person name="Kirkness E.F."/>
            <person name="Kerlavage A.R."/>
            <person name="Bult C.J."/>
            <person name="Tomb J.-F."/>
            <person name="Dougherty B.A."/>
            <person name="Merrick J.M."/>
            <person name="McKenney K."/>
            <person name="Sutton G.G."/>
            <person name="FitzHugh W."/>
            <person name="Fields C.A."/>
            <person name="Gocayne J.D."/>
            <person name="Scott J.D."/>
            <person name="Shirley R."/>
            <person name="Liu L.-I."/>
            <person name="Glodek A."/>
            <person name="Kelley J.M."/>
            <person name="Weidman J.F."/>
            <person name="Phillips C.A."/>
            <person name="Spriggs T."/>
            <person name="Hedblom E."/>
            <person name="Cotton M.D."/>
            <person name="Utterback T.R."/>
            <person name="Hanna M.C."/>
            <person name="Nguyen D.T."/>
            <person name="Saudek D.M."/>
            <person name="Brandon R.C."/>
            <person name="Fine L.D."/>
            <person name="Fritchman J.L."/>
            <person name="Fuhrmann J.L."/>
            <person name="Geoghagen N.S.M."/>
            <person name="Gnehm C.L."/>
            <person name="McDonald L.A."/>
            <person name="Small K.V."/>
            <person name="Fraser C.M."/>
            <person name="Smith H.O."/>
            <person name="Venter J.C."/>
        </authorList>
    </citation>
    <scope>NUCLEOTIDE SEQUENCE [LARGE SCALE GENOMIC DNA]</scope>
    <source>
        <strain>ATCC 51907 / DSM 11121 / KW20 / Rd</strain>
    </source>
</reference>